<reference key="1">
    <citation type="journal article" date="2004" name="Nat. Genet.">
        <title>Evidence in the Legionella pneumophila genome for exploitation of host cell functions and high genome plasticity.</title>
        <authorList>
            <person name="Cazalet C."/>
            <person name="Rusniok C."/>
            <person name="Brueggemann H."/>
            <person name="Zidane N."/>
            <person name="Magnier A."/>
            <person name="Ma L."/>
            <person name="Tichit M."/>
            <person name="Jarraud S."/>
            <person name="Bouchier C."/>
            <person name="Vandenesch F."/>
            <person name="Kunst F."/>
            <person name="Etienne J."/>
            <person name="Glaser P."/>
            <person name="Buchrieser C."/>
        </authorList>
    </citation>
    <scope>NUCLEOTIDE SEQUENCE [LARGE SCALE GENOMIC DNA]</scope>
    <source>
        <strain>Lens</strain>
    </source>
</reference>
<protein>
    <recommendedName>
        <fullName evidence="1">Lipid-A-disaccharide synthase 1</fullName>
        <ecNumber evidence="1">2.4.1.182</ecNumber>
    </recommendedName>
</protein>
<gene>
    <name evidence="1" type="primary">lpxB1</name>
    <name type="ordered locus">lpl1322</name>
</gene>
<comment type="function">
    <text evidence="1">Condensation of UDP-2,3-diacylglucosamine and 2,3-diacylglucosamine-1-phosphate to form lipid A disaccharide, a precursor of lipid A, a phosphorylated glycolipid that anchors the lipopolysaccharide to the outer membrane of the cell.</text>
</comment>
<comment type="catalytic activity">
    <reaction evidence="1">
        <text>a lipid X + a UDP-2-N,3-O-bis[(3R)-3-hydroxyacyl]-alpha-D-glucosamine = a lipid A disaccharide + UDP + H(+)</text>
        <dbReference type="Rhea" id="RHEA:67828"/>
        <dbReference type="ChEBI" id="CHEBI:15378"/>
        <dbReference type="ChEBI" id="CHEBI:58223"/>
        <dbReference type="ChEBI" id="CHEBI:137748"/>
        <dbReference type="ChEBI" id="CHEBI:176338"/>
        <dbReference type="ChEBI" id="CHEBI:176343"/>
        <dbReference type="EC" id="2.4.1.182"/>
    </reaction>
</comment>
<comment type="pathway">
    <text evidence="1">Bacterial outer membrane biogenesis; LPS lipid A biosynthesis.</text>
</comment>
<comment type="similarity">
    <text evidence="1">Belongs to the LpxB family.</text>
</comment>
<sequence>MPNASRVVIVAGEESGDHHAAELVKQLKAVYPDLEISGIGGKHLRAAGVHLISDLTRYAVTGLTEIIPFLKIFRKAFQDIKQHLSTQKPDLLILVDYPAFNLRLAKYAKKKLGLKIIYYISPQIWAWKGKRIHLIKDCIDKMAVIFPFEKTIYENAGVPVSFVGHPLVKKIAAAKDKHSSRTSLGLPLNEPIIALLPGSRHSEIERHIPILVNTAKLLTLDSPKLRFVVPIAGTINPDKVKAYFSNQNLTVTFIQGQAIECMSAADFVIVASGTASLECALLEKPMCIIYKSSFLTYVAAMYFIKVKFLGLCNLLANKMMVPEFLQYDCNAIELSRYISNFHNNPNQPESMINQLAKLKESLSSSQADCSLFDLVVAELPEKNA</sequence>
<dbReference type="EC" id="2.4.1.182" evidence="1"/>
<dbReference type="EMBL" id="CR628337">
    <property type="protein sequence ID" value="CAH15562.1"/>
    <property type="molecule type" value="Genomic_DNA"/>
</dbReference>
<dbReference type="RefSeq" id="WP_011215392.1">
    <property type="nucleotide sequence ID" value="NC_006369.1"/>
</dbReference>
<dbReference type="SMR" id="Q5WWX7"/>
<dbReference type="CAZy" id="GT19">
    <property type="family name" value="Glycosyltransferase Family 19"/>
</dbReference>
<dbReference type="DNASU" id="3114168"/>
<dbReference type="KEGG" id="lpf:lpl1322"/>
<dbReference type="LegioList" id="lpl1322"/>
<dbReference type="HOGENOM" id="CLU_036577_3_1_6"/>
<dbReference type="BRENDA" id="2.4.1.182">
    <property type="organism ID" value="2943"/>
</dbReference>
<dbReference type="UniPathway" id="UPA00973"/>
<dbReference type="Proteomes" id="UP000002517">
    <property type="component" value="Chromosome"/>
</dbReference>
<dbReference type="GO" id="GO:0016020">
    <property type="term" value="C:membrane"/>
    <property type="evidence" value="ECO:0007669"/>
    <property type="project" value="GOC"/>
</dbReference>
<dbReference type="GO" id="GO:0008915">
    <property type="term" value="F:lipid-A-disaccharide synthase activity"/>
    <property type="evidence" value="ECO:0007669"/>
    <property type="project" value="UniProtKB-UniRule"/>
</dbReference>
<dbReference type="GO" id="GO:0005543">
    <property type="term" value="F:phospholipid binding"/>
    <property type="evidence" value="ECO:0007669"/>
    <property type="project" value="TreeGrafter"/>
</dbReference>
<dbReference type="GO" id="GO:0009245">
    <property type="term" value="P:lipid A biosynthetic process"/>
    <property type="evidence" value="ECO:0007669"/>
    <property type="project" value="UniProtKB-UniRule"/>
</dbReference>
<dbReference type="HAMAP" id="MF_00392">
    <property type="entry name" value="LpxB"/>
    <property type="match status" value="1"/>
</dbReference>
<dbReference type="InterPro" id="IPR003835">
    <property type="entry name" value="Glyco_trans_19"/>
</dbReference>
<dbReference type="NCBIfam" id="TIGR00215">
    <property type="entry name" value="lpxB"/>
    <property type="match status" value="1"/>
</dbReference>
<dbReference type="PANTHER" id="PTHR30372">
    <property type="entry name" value="LIPID-A-DISACCHARIDE SYNTHASE"/>
    <property type="match status" value="1"/>
</dbReference>
<dbReference type="PANTHER" id="PTHR30372:SF4">
    <property type="entry name" value="LIPID-A-DISACCHARIDE SYNTHASE, MITOCHONDRIAL-RELATED"/>
    <property type="match status" value="1"/>
</dbReference>
<dbReference type="Pfam" id="PF02684">
    <property type="entry name" value="LpxB"/>
    <property type="match status" value="1"/>
</dbReference>
<dbReference type="SUPFAM" id="SSF53756">
    <property type="entry name" value="UDP-Glycosyltransferase/glycogen phosphorylase"/>
    <property type="match status" value="1"/>
</dbReference>
<name>LPXB1_LEGPL</name>
<evidence type="ECO:0000255" key="1">
    <source>
        <dbReference type="HAMAP-Rule" id="MF_00392"/>
    </source>
</evidence>
<keyword id="KW-0328">Glycosyltransferase</keyword>
<keyword id="KW-0441">Lipid A biosynthesis</keyword>
<keyword id="KW-0444">Lipid biosynthesis</keyword>
<keyword id="KW-0443">Lipid metabolism</keyword>
<keyword id="KW-0808">Transferase</keyword>
<feature type="chain" id="PRO_0000255190" description="Lipid-A-disaccharide synthase 1">
    <location>
        <begin position="1"/>
        <end position="384"/>
    </location>
</feature>
<accession>Q5WWX7</accession>
<proteinExistence type="inferred from homology"/>
<organism>
    <name type="scientific">Legionella pneumophila (strain Lens)</name>
    <dbReference type="NCBI Taxonomy" id="297245"/>
    <lineage>
        <taxon>Bacteria</taxon>
        <taxon>Pseudomonadati</taxon>
        <taxon>Pseudomonadota</taxon>
        <taxon>Gammaproteobacteria</taxon>
        <taxon>Legionellales</taxon>
        <taxon>Legionellaceae</taxon>
        <taxon>Legionella</taxon>
    </lineage>
</organism>